<evidence type="ECO:0000250" key="1">
    <source>
        <dbReference type="UniProtKB" id="O93801"/>
    </source>
</evidence>
<evidence type="ECO:0000269" key="2">
    <source>
    </source>
</evidence>
<evidence type="ECO:0000269" key="3">
    <source>
    </source>
</evidence>
<evidence type="ECO:0000269" key="4">
    <source>
    </source>
</evidence>
<evidence type="ECO:0000269" key="5">
    <source ref="5"/>
</evidence>
<evidence type="ECO:0000303" key="6">
    <source>
    </source>
</evidence>
<evidence type="ECO:0000303" key="7">
    <source>
    </source>
</evidence>
<evidence type="ECO:0000305" key="8"/>
<evidence type="ECO:0000305" key="9">
    <source>
    </source>
</evidence>
<sequence>MQQPIVGVGHSMGGCQIATLSVTSRRMFSTMILLDPAIGPLDMGLATLGLGQLTLRRRTQWPTREDAEKALRTSFSTWDPQVLDLLIRHSIHSDKQSIEMEDGPVSLVTGRYQELVNYIKPSFIRSGKVNGQELVHQTGPVDMYHMLGLVTCSALYLCGGESTLSVPRARDLWLSRTAKLSYSKEPGETRKVDERVVPDTGHFLPMEEPKECADIIADWIEKDECIAWNCCLGKRGKTWRELSNASKEMGAEAWMEYLQSKL</sequence>
<accession>B2DFU4</accession>
<feature type="chain" id="PRO_0000444824" description="Abhydrolase domain-containing protein AFT2-1">
    <location>
        <begin position="1"/>
        <end position="262"/>
    </location>
</feature>
<feature type="short sequence motif" description="Peroxisomal targeting signal type 1" evidence="1">
    <location>
        <begin position="260"/>
        <end position="262"/>
    </location>
</feature>
<keyword id="KW-0378">Hydrolase</keyword>
<keyword id="KW-0576">Peroxisome</keyword>
<keyword id="KW-0843">Virulence</keyword>
<protein>
    <recommendedName>
        <fullName evidence="6">Abhydrolase domain-containing protein AFT2-1</fullName>
        <ecNumber evidence="9">3.1.1.-</ecNumber>
    </recommendedName>
    <alternativeName>
        <fullName evidence="6">AF-toxin biosynthesis protein 2-1</fullName>
    </alternativeName>
</protein>
<gene>
    <name evidence="6" type="primary">AFT2-1</name>
</gene>
<proteinExistence type="inferred from homology"/>
<organism>
    <name type="scientific">Alternaria alternata</name>
    <name type="common">Alternaria rot fungus</name>
    <name type="synonym">Torula alternata</name>
    <dbReference type="NCBI Taxonomy" id="5599"/>
    <lineage>
        <taxon>Eukaryota</taxon>
        <taxon>Fungi</taxon>
        <taxon>Dikarya</taxon>
        <taxon>Ascomycota</taxon>
        <taxon>Pezizomycotina</taxon>
        <taxon>Dothideomycetes</taxon>
        <taxon>Pleosporomycetidae</taxon>
        <taxon>Pleosporales</taxon>
        <taxon>Pleosporineae</taxon>
        <taxon>Pleosporaceae</taxon>
        <taxon>Alternaria</taxon>
        <taxon>Alternaria sect. Alternaria</taxon>
        <taxon>Alternaria alternata complex</taxon>
    </lineage>
</organism>
<dbReference type="EC" id="3.1.1.-" evidence="9"/>
<dbReference type="EMBL" id="AB434468">
    <property type="protein sequence ID" value="BAG24496.1"/>
    <property type="molecule type" value="Genomic_DNA"/>
</dbReference>
<dbReference type="EMBL" id="AB872925">
    <property type="protein sequence ID" value="BAO10619.1"/>
    <property type="molecule type" value="Genomic_DNA"/>
</dbReference>
<dbReference type="SMR" id="B2DFU4"/>
<dbReference type="VEuPathDB" id="FungiDB:CC77DRAFT_959939"/>
<dbReference type="GO" id="GO:0005777">
    <property type="term" value="C:peroxisome"/>
    <property type="evidence" value="ECO:0007669"/>
    <property type="project" value="UniProtKB-SubCell"/>
</dbReference>
<dbReference type="GO" id="GO:0016787">
    <property type="term" value="F:hydrolase activity"/>
    <property type="evidence" value="ECO:0007669"/>
    <property type="project" value="UniProtKB-KW"/>
</dbReference>
<dbReference type="Gene3D" id="3.40.50.1820">
    <property type="entry name" value="alpha/beta hydrolase"/>
    <property type="match status" value="1"/>
</dbReference>
<dbReference type="InterPro" id="IPR000073">
    <property type="entry name" value="AB_hydrolase_1"/>
</dbReference>
<dbReference type="InterPro" id="IPR029058">
    <property type="entry name" value="AB_hydrolase_fold"/>
</dbReference>
<dbReference type="Pfam" id="PF12697">
    <property type="entry name" value="Abhydrolase_6"/>
    <property type="match status" value="1"/>
</dbReference>
<dbReference type="SUPFAM" id="SSF53474">
    <property type="entry name" value="alpha/beta-Hydrolases"/>
    <property type="match status" value="1"/>
</dbReference>
<name>AFT21_ALTAL</name>
<reference key="1">
    <citation type="journal article" date="2008" name="Mol. Plant Microbe Interact.">
        <title>Functional analysis of a multicopy host-selective ACT-toxin biosynthesis gene in the tangerine pathotype of Alternaria alternata using RNA silencing.</title>
        <authorList>
            <person name="Miyamoto Y."/>
            <person name="Masunaka A."/>
            <person name="Tsuge T."/>
            <person name="Yamamoto M."/>
            <person name="Ohtani K."/>
            <person name="Fukumoto T."/>
            <person name="Gomi K."/>
            <person name="Peever T.L."/>
            <person name="Akimitsu K."/>
        </authorList>
    </citation>
    <scope>NUCLEOTIDE SEQUENCE [GENOMIC DNA]</scope>
    <scope>FUNCTION</scope>
    <scope>PATHWAY</scope>
    <source>
        <strain>NAF8</strain>
    </source>
</reference>
<reference key="2">
    <citation type="journal article" date="2014" name="New Phytol.">
        <title>Complex regulation of secondary metabolism controlling pathogenicity in the phytopathogenic fungus Alternaria alternata.</title>
        <authorList>
            <person name="Takaoka S."/>
            <person name="Kurata M."/>
            <person name="Harimoto Y."/>
            <person name="Hatta R."/>
            <person name="Yamamoto M."/>
            <person name="Akimitsu K."/>
            <person name="Tsuge T."/>
        </authorList>
    </citation>
    <scope>NUCLEOTIDE SEQUENCE [GENOMIC DNA]</scope>
    <source>
        <strain>NAF8</strain>
    </source>
</reference>
<reference key="3">
    <citation type="journal article" date="2002" name="Genetics">
        <title>A conditionally dispensable chromosome controls host-specific pathogenicity in the fungal plant pathogen Alternaria alternata.</title>
        <authorList>
            <person name="Hatta R."/>
            <person name="Ito K."/>
            <person name="Hosaki Y."/>
            <person name="Tanaka T."/>
            <person name="Tanaka A."/>
            <person name="Yamamoto M."/>
            <person name="Akimitsu K."/>
            <person name="Tsuge T."/>
        </authorList>
    </citation>
    <scope>FUNCTION</scope>
    <source>
        <strain>NAF8</strain>
    </source>
</reference>
<reference key="4">
    <citation type="journal article" date="2004" name="Mol. Microbiol.">
        <title>Dissection of the host range of the fungal plant pathogen Alternaria alternata by modification of secondary metabolism.</title>
        <authorList>
            <person name="Ito K."/>
            <person name="Tanaka T."/>
            <person name="Hatta R."/>
            <person name="Yamamoto M."/>
            <person name="Akimitsu K."/>
            <person name="Tsuge T."/>
        </authorList>
    </citation>
    <scope>FUNCTION</scope>
    <source>
        <strain>NAF8</strain>
    </source>
</reference>
<reference key="5">
    <citation type="journal article" date="2005" name="J. Gen. Plant Pathol.">
        <title>Structural analysis of cosmid clone pcAFT-2 carrying AFT10-1 encoding an acyl-CoA dehydrogenase involved in AF-toxin production in the strawberry pathotype of Alternaria alternata.</title>
        <authorList>
            <person name="Ruswandi S."/>
            <person name="Kitani K."/>
            <person name="Akimitsu K."/>
            <person name="Tsuge T."/>
            <person name="Shiraishi T."/>
            <person name="Yamamoto M."/>
        </authorList>
    </citation>
    <scope>FUNCTION</scope>
    <source>
        <strain>NAF8</strain>
    </source>
</reference>
<reference key="6">
    <citation type="journal article" date="2013" name="FEMS Microbiol. Rev.">
        <title>Host-selective toxins produced by the plant pathogenic fungus Alternaria alternata.</title>
        <authorList>
            <person name="Tsuge T."/>
            <person name="Harimoto Y."/>
            <person name="Akimitsu K."/>
            <person name="Ohtani K."/>
            <person name="Kodama M."/>
            <person name="Akagi Y."/>
            <person name="Egusa M."/>
            <person name="Yamamoto M."/>
            <person name="Otani H."/>
        </authorList>
    </citation>
    <scope>REVIEW ON HOST-SELECTIVE TOXINS</scope>
</reference>
<comment type="function">
    <text evidence="2 3 4 5 7">Abhydrolase domain-containing protein; part of the gene clusters that mediate the biosynthesis of the host-selective toxins (HSTs) AF-toxins responsible for Alternaria black spot of strawberry disease by the strawberry pathotype (PubMed:18986255). AF-toxin I and III are valine derivatives of 2,3-dyhydroxy-isovaleric acid and 2-hydroxy-isovaleric acid respectively, while AF II is an isoleucine derivative of 2-hydroxy-valeric acid (PubMed:15066029, PubMed:22846083, Ref.5). These derivatives are bound to a 9,10-epoxy-8-hydroxy-9-methyl-decatrienoic acid (EDA) moiety (PubMed:15066029, PubMed:22846083, Ref.5). On cellular level, AF-toxins affect plasma membrane of susceptible cells and cause a sudden increase in loss of K(+) after a few minutes of toxin treatment (PubMed:22846083). The aldo-keto reductase AFTS1 catalyzes the conversion of 2-keto-isovaleric acid (2-KIV) to 2-hydroxy-isovaleric acid (2-HIV) by reduction of its ketone to an alcohol (PubMed:15066029). The acyl-CoA ligase AFT1, the hydrolase AFT2 and the enoyl-CoA hydratases AFT3 and AFT6, but also the polyketide synthase AFT9, the acyl-CoA dehydrogenase AFT10, the cytochrome P450 monooxygenase AFT11 and the oxidoreductase AFT12 are all involved in the biosynthesis of the AK-, AF- and ACT-toxin common EDA structural moiety (PubMed:12019223, PubMed:18986255, Ref.5). The exact function of each enzyme, and of additional enzymes identified within the AF-toxin clusters have still to be determined (PubMed:12019223, PubMed:18986255, Ref.5).</text>
</comment>
<comment type="pathway">
    <text evidence="9">Mycotoxin biosynthesis.</text>
</comment>
<comment type="subcellular location">
    <subcellularLocation>
        <location evidence="1">Peroxisome</location>
    </subcellularLocation>
    <text evidence="1">The peroxisomal location requires the C-terminal tripeptide peroxisomal targeting signal.</text>
</comment>
<comment type="miscellaneous">
    <text evidence="2">Gene clusters encoding host-selective toxins (HSTs) are localized on conditionally dispensable chromosomes (CDCs), also called supernumerary chromosomes, where they are present in multiple copies (PubMed:12019223). The CDCs are not essential for saprophytic growth but controls host-selective pathogenicity (PubMed:12019223).</text>
</comment>
<comment type="similarity">
    <text evidence="8">Belongs to the AB hydrolase superfamily. AKT2 hydrolase family.</text>
</comment>